<reference key="1">
    <citation type="submission" date="2007-07" db="EMBL/GenBank/DDBJ databases">
        <title>Complete genome sequence of Campylobacter hominis ATCC BAA-381, a commensal isolated from the human gastrointestinal tract.</title>
        <authorList>
            <person name="Fouts D.E."/>
            <person name="Mongodin E.F."/>
            <person name="Puiu D."/>
            <person name="Sebastian Y."/>
            <person name="Miller W.G."/>
            <person name="Mandrell R.E."/>
            <person name="Nelson K.E."/>
        </authorList>
    </citation>
    <scope>NUCLEOTIDE SEQUENCE [LARGE SCALE GENOMIC DNA]</scope>
    <source>
        <strain>ATCC BAA-381 / DSM 21671 / CCUG 45161 / LMG 19568 / NCTC 13146 / CH001A</strain>
    </source>
</reference>
<name>RS14Z_CAMHC</name>
<organism>
    <name type="scientific">Campylobacter hominis (strain ATCC BAA-381 / DSM 21671 / CCUG 45161 / LMG 19568 / NCTC 13146 / CH001A)</name>
    <dbReference type="NCBI Taxonomy" id="360107"/>
    <lineage>
        <taxon>Bacteria</taxon>
        <taxon>Pseudomonadati</taxon>
        <taxon>Campylobacterota</taxon>
        <taxon>Epsilonproteobacteria</taxon>
        <taxon>Campylobacterales</taxon>
        <taxon>Campylobacteraceae</taxon>
        <taxon>Campylobacter</taxon>
    </lineage>
</organism>
<proteinExistence type="inferred from homology"/>
<sequence length="61" mass="6885">MAKKSMIAKANRPAKFSSRAYTRCKICGRPHSVYRDFGICRVCLRKLANEGLIPGLKKASW</sequence>
<comment type="function">
    <text evidence="1">Binds 16S rRNA, required for the assembly of 30S particles and may also be responsible for determining the conformation of the 16S rRNA at the A site.</text>
</comment>
<comment type="cofactor">
    <cofactor evidence="1">
        <name>Zn(2+)</name>
        <dbReference type="ChEBI" id="CHEBI:29105"/>
    </cofactor>
    <text evidence="1">Binds 1 zinc ion per subunit.</text>
</comment>
<comment type="subunit">
    <text evidence="1">Part of the 30S ribosomal subunit. Contacts proteins S3 and S10.</text>
</comment>
<comment type="similarity">
    <text evidence="1">Belongs to the universal ribosomal protein uS14 family. Zinc-binding uS14 subfamily.</text>
</comment>
<gene>
    <name evidence="1" type="primary">rpsZ</name>
    <name evidence="1" type="synonym">rpsN</name>
    <name type="ordered locus">CHAB381_0097</name>
</gene>
<accession>A7HZL9</accession>
<protein>
    <recommendedName>
        <fullName evidence="1">Small ribosomal subunit protein uS14</fullName>
    </recommendedName>
    <alternativeName>
        <fullName evidence="2">30S ribosomal protein S14 type Z</fullName>
    </alternativeName>
</protein>
<evidence type="ECO:0000255" key="1">
    <source>
        <dbReference type="HAMAP-Rule" id="MF_01364"/>
    </source>
</evidence>
<evidence type="ECO:0000305" key="2"/>
<feature type="chain" id="PRO_1000067931" description="Small ribosomal subunit protein uS14">
    <location>
        <begin position="1"/>
        <end position="61"/>
    </location>
</feature>
<feature type="binding site" evidence="1">
    <location>
        <position position="24"/>
    </location>
    <ligand>
        <name>Zn(2+)</name>
        <dbReference type="ChEBI" id="CHEBI:29105"/>
    </ligand>
</feature>
<feature type="binding site" evidence="1">
    <location>
        <position position="27"/>
    </location>
    <ligand>
        <name>Zn(2+)</name>
        <dbReference type="ChEBI" id="CHEBI:29105"/>
    </ligand>
</feature>
<feature type="binding site" evidence="1">
    <location>
        <position position="40"/>
    </location>
    <ligand>
        <name>Zn(2+)</name>
        <dbReference type="ChEBI" id="CHEBI:29105"/>
    </ligand>
</feature>
<feature type="binding site" evidence="1">
    <location>
        <position position="43"/>
    </location>
    <ligand>
        <name>Zn(2+)</name>
        <dbReference type="ChEBI" id="CHEBI:29105"/>
    </ligand>
</feature>
<keyword id="KW-0479">Metal-binding</keyword>
<keyword id="KW-1185">Reference proteome</keyword>
<keyword id="KW-0687">Ribonucleoprotein</keyword>
<keyword id="KW-0689">Ribosomal protein</keyword>
<keyword id="KW-0694">RNA-binding</keyword>
<keyword id="KW-0699">rRNA-binding</keyword>
<keyword id="KW-0862">Zinc</keyword>
<dbReference type="EMBL" id="CP000776">
    <property type="protein sequence ID" value="ABS52083.1"/>
    <property type="molecule type" value="Genomic_DNA"/>
</dbReference>
<dbReference type="RefSeq" id="WP_011991557.1">
    <property type="nucleotide sequence ID" value="NC_009714.1"/>
</dbReference>
<dbReference type="SMR" id="A7HZL9"/>
<dbReference type="STRING" id="360107.CHAB381_0097"/>
<dbReference type="KEGG" id="cha:CHAB381_0097"/>
<dbReference type="eggNOG" id="COG0199">
    <property type="taxonomic scope" value="Bacteria"/>
</dbReference>
<dbReference type="HOGENOM" id="CLU_139869_3_0_7"/>
<dbReference type="OrthoDB" id="9810484at2"/>
<dbReference type="Proteomes" id="UP000002407">
    <property type="component" value="Chromosome"/>
</dbReference>
<dbReference type="GO" id="GO:0005737">
    <property type="term" value="C:cytoplasm"/>
    <property type="evidence" value="ECO:0007669"/>
    <property type="project" value="UniProtKB-ARBA"/>
</dbReference>
<dbReference type="GO" id="GO:0015935">
    <property type="term" value="C:small ribosomal subunit"/>
    <property type="evidence" value="ECO:0007669"/>
    <property type="project" value="TreeGrafter"/>
</dbReference>
<dbReference type="GO" id="GO:0019843">
    <property type="term" value="F:rRNA binding"/>
    <property type="evidence" value="ECO:0007669"/>
    <property type="project" value="UniProtKB-UniRule"/>
</dbReference>
<dbReference type="GO" id="GO:0003735">
    <property type="term" value="F:structural constituent of ribosome"/>
    <property type="evidence" value="ECO:0007669"/>
    <property type="project" value="InterPro"/>
</dbReference>
<dbReference type="GO" id="GO:0008270">
    <property type="term" value="F:zinc ion binding"/>
    <property type="evidence" value="ECO:0007669"/>
    <property type="project" value="UniProtKB-UniRule"/>
</dbReference>
<dbReference type="GO" id="GO:0006412">
    <property type="term" value="P:translation"/>
    <property type="evidence" value="ECO:0007669"/>
    <property type="project" value="UniProtKB-UniRule"/>
</dbReference>
<dbReference type="FunFam" id="4.10.830.10:FF:000001">
    <property type="entry name" value="30S ribosomal protein S14 type Z"/>
    <property type="match status" value="1"/>
</dbReference>
<dbReference type="Gene3D" id="4.10.830.10">
    <property type="entry name" value="30s Ribosomal Protein S14, Chain N"/>
    <property type="match status" value="1"/>
</dbReference>
<dbReference type="HAMAP" id="MF_01364_B">
    <property type="entry name" value="Ribosomal_uS14_2_B"/>
    <property type="match status" value="1"/>
</dbReference>
<dbReference type="InterPro" id="IPR001209">
    <property type="entry name" value="Ribosomal_uS14"/>
</dbReference>
<dbReference type="InterPro" id="IPR023053">
    <property type="entry name" value="Ribosomal_uS14_bact"/>
</dbReference>
<dbReference type="InterPro" id="IPR018271">
    <property type="entry name" value="Ribosomal_uS14_CS"/>
</dbReference>
<dbReference type="InterPro" id="IPR043140">
    <property type="entry name" value="Ribosomal_uS14_sf"/>
</dbReference>
<dbReference type="NCBIfam" id="NF005974">
    <property type="entry name" value="PRK08061.1"/>
    <property type="match status" value="1"/>
</dbReference>
<dbReference type="PANTHER" id="PTHR19836">
    <property type="entry name" value="30S RIBOSOMAL PROTEIN S14"/>
    <property type="match status" value="1"/>
</dbReference>
<dbReference type="PANTHER" id="PTHR19836:SF19">
    <property type="entry name" value="SMALL RIBOSOMAL SUBUNIT PROTEIN US14M"/>
    <property type="match status" value="1"/>
</dbReference>
<dbReference type="Pfam" id="PF00253">
    <property type="entry name" value="Ribosomal_S14"/>
    <property type="match status" value="1"/>
</dbReference>
<dbReference type="SUPFAM" id="SSF57716">
    <property type="entry name" value="Glucocorticoid receptor-like (DNA-binding domain)"/>
    <property type="match status" value="1"/>
</dbReference>
<dbReference type="PROSITE" id="PS00527">
    <property type="entry name" value="RIBOSOMAL_S14"/>
    <property type="match status" value="1"/>
</dbReference>